<feature type="chain" id="PRO_0000189790" description="Gamma-glutamyl phosphate reductase">
    <location>
        <begin position="1"/>
        <end position="416"/>
    </location>
</feature>
<comment type="function">
    <text evidence="1">Catalyzes the NADPH-dependent reduction of L-glutamate 5-phosphate into L-glutamate 5-semialdehyde and phosphate. The product spontaneously undergoes cyclization to form 1-pyrroline-5-carboxylate.</text>
</comment>
<comment type="catalytic activity">
    <reaction evidence="1">
        <text>L-glutamate 5-semialdehyde + phosphate + NADP(+) = L-glutamyl 5-phosphate + NADPH + H(+)</text>
        <dbReference type="Rhea" id="RHEA:19541"/>
        <dbReference type="ChEBI" id="CHEBI:15378"/>
        <dbReference type="ChEBI" id="CHEBI:43474"/>
        <dbReference type="ChEBI" id="CHEBI:57783"/>
        <dbReference type="ChEBI" id="CHEBI:58066"/>
        <dbReference type="ChEBI" id="CHEBI:58274"/>
        <dbReference type="ChEBI" id="CHEBI:58349"/>
        <dbReference type="EC" id="1.2.1.41"/>
    </reaction>
</comment>
<comment type="pathway">
    <text evidence="1">Amino-acid biosynthesis; L-proline biosynthesis; L-glutamate 5-semialdehyde from L-glutamate: step 2/2.</text>
</comment>
<comment type="subcellular location">
    <subcellularLocation>
        <location evidence="1">Cytoplasm</location>
    </subcellularLocation>
</comment>
<comment type="similarity">
    <text evidence="1">Belongs to the gamma-glutamyl phosphate reductase family.</text>
</comment>
<reference key="1">
    <citation type="journal article" date="2001" name="Proc. Natl. Acad. Sci. U.S.A.">
        <title>Complete genome sequence of an M1 strain of Streptococcus pyogenes.</title>
        <authorList>
            <person name="Ferretti J.J."/>
            <person name="McShan W.M."/>
            <person name="Ajdic D.J."/>
            <person name="Savic D.J."/>
            <person name="Savic G."/>
            <person name="Lyon K."/>
            <person name="Primeaux C."/>
            <person name="Sezate S."/>
            <person name="Suvorov A.N."/>
            <person name="Kenton S."/>
            <person name="Lai H.S."/>
            <person name="Lin S.P."/>
            <person name="Qian Y."/>
            <person name="Jia H.G."/>
            <person name="Najar F.Z."/>
            <person name="Ren Q."/>
            <person name="Zhu H."/>
            <person name="Song L."/>
            <person name="White J."/>
            <person name="Yuan X."/>
            <person name="Clifton S.W."/>
            <person name="Roe B.A."/>
            <person name="McLaughlin R.E."/>
        </authorList>
    </citation>
    <scope>NUCLEOTIDE SEQUENCE [LARGE SCALE GENOMIC DNA]</scope>
    <source>
        <strain>ATCC 700294 / SF370 / Serotype M1</strain>
    </source>
</reference>
<reference key="2">
    <citation type="journal article" date="2005" name="J. Infect. Dis.">
        <title>Evolutionary origin and emergence of a highly successful clone of serotype M1 group A Streptococcus involved multiple horizontal gene transfer events.</title>
        <authorList>
            <person name="Sumby P."/>
            <person name="Porcella S.F."/>
            <person name="Madrigal A.G."/>
            <person name="Barbian K.D."/>
            <person name="Virtaneva K."/>
            <person name="Ricklefs S.M."/>
            <person name="Sturdevant D.E."/>
            <person name="Graham M.R."/>
            <person name="Vuopio-Varkila J."/>
            <person name="Hoe N.P."/>
            <person name="Musser J.M."/>
        </authorList>
    </citation>
    <scope>NUCLEOTIDE SEQUENCE [LARGE SCALE GENOMIC DNA]</scope>
    <source>
        <strain>ATCC BAA-947 / MGAS5005 / Serotype M1</strain>
    </source>
</reference>
<sequence length="416" mass="45429">MTDMRRLGQRAKQASLLIAPLSTQIKNRFLSTLAKALVDDTQTLLAANQKDLANAKEHGISDIMMDRLRLTSERIKAIAQGVQQVADLADPIGQVIKGYTNLDGLKILQKRVPLGVIAMIFESRPNVSVDAFSLAFKTNNAIILRGGKDALHSNKALVKLIRQSLEKSGITPDAVQLVEDPSHAVAEELMQATDYVDVLIPRGGAKLIQTVKEKAKVPVIETGVGNVHIYVDAQADLDIATKIVINAKTKRPSVCNAAEGLVIHEAVAARFIPMLEKAINQVQPVEWRADDKALPLFEQAVPAKAEDFETEFLDYIMSVKVVSSLEEAISWINQYTSHHSEAIITRDIKAAETFQDLVDAAAVYVNASTRFTDGFVFGLGAEIGISTQKMHARGPMGLEALTSTKFYINGDGHIRE</sequence>
<gene>
    <name evidence="1" type="primary">proA</name>
    <name type="ordered locus">SPy_1670</name>
    <name type="ordered locus">M5005_Spy1370</name>
</gene>
<evidence type="ECO:0000255" key="1">
    <source>
        <dbReference type="HAMAP-Rule" id="MF_00412"/>
    </source>
</evidence>
<name>PROA_STRP1</name>
<accession>Q99YJ8</accession>
<accession>Q48XD7</accession>
<protein>
    <recommendedName>
        <fullName evidence="1">Gamma-glutamyl phosphate reductase</fullName>
        <shortName evidence="1">GPR</shortName>
        <ecNumber evidence="1">1.2.1.41</ecNumber>
    </recommendedName>
    <alternativeName>
        <fullName evidence="1">Glutamate-5-semialdehyde dehydrogenase</fullName>
    </alternativeName>
    <alternativeName>
        <fullName evidence="1">Glutamyl-gamma-semialdehyde dehydrogenase</fullName>
        <shortName evidence="1">GSA dehydrogenase</shortName>
    </alternativeName>
</protein>
<dbReference type="EC" id="1.2.1.41" evidence="1"/>
<dbReference type="EMBL" id="AE004092">
    <property type="protein sequence ID" value="AAK34429.1"/>
    <property type="molecule type" value="Genomic_DNA"/>
</dbReference>
<dbReference type="EMBL" id="CP000017">
    <property type="protein sequence ID" value="AAZ51988.1"/>
    <property type="molecule type" value="Genomic_DNA"/>
</dbReference>
<dbReference type="RefSeq" id="NP_269708.1">
    <property type="nucleotide sequence ID" value="NC_002737.2"/>
</dbReference>
<dbReference type="SMR" id="Q99YJ8"/>
<dbReference type="PaxDb" id="1314-HKU360_01422"/>
<dbReference type="KEGG" id="spy:SPy_1670"/>
<dbReference type="KEGG" id="spz:M5005_Spy1370"/>
<dbReference type="PATRIC" id="fig|160490.10.peg.1454"/>
<dbReference type="HOGENOM" id="CLU_030231_0_0_9"/>
<dbReference type="OMA" id="KTQRYGT"/>
<dbReference type="UniPathway" id="UPA00098">
    <property type="reaction ID" value="UER00360"/>
</dbReference>
<dbReference type="Proteomes" id="UP000000750">
    <property type="component" value="Chromosome"/>
</dbReference>
<dbReference type="GO" id="GO:0005737">
    <property type="term" value="C:cytoplasm"/>
    <property type="evidence" value="ECO:0007669"/>
    <property type="project" value="UniProtKB-SubCell"/>
</dbReference>
<dbReference type="GO" id="GO:0004350">
    <property type="term" value="F:glutamate-5-semialdehyde dehydrogenase activity"/>
    <property type="evidence" value="ECO:0007669"/>
    <property type="project" value="UniProtKB-UniRule"/>
</dbReference>
<dbReference type="GO" id="GO:0050661">
    <property type="term" value="F:NADP binding"/>
    <property type="evidence" value="ECO:0007669"/>
    <property type="project" value="InterPro"/>
</dbReference>
<dbReference type="GO" id="GO:0055129">
    <property type="term" value="P:L-proline biosynthetic process"/>
    <property type="evidence" value="ECO:0007669"/>
    <property type="project" value="UniProtKB-UniRule"/>
</dbReference>
<dbReference type="CDD" id="cd07079">
    <property type="entry name" value="ALDH_F18-19_ProA-GPR"/>
    <property type="match status" value="1"/>
</dbReference>
<dbReference type="FunFam" id="3.40.309.10:FF:000006">
    <property type="entry name" value="Gamma-glutamyl phosphate reductase"/>
    <property type="match status" value="1"/>
</dbReference>
<dbReference type="Gene3D" id="3.40.605.10">
    <property type="entry name" value="Aldehyde Dehydrogenase, Chain A, domain 1"/>
    <property type="match status" value="1"/>
</dbReference>
<dbReference type="Gene3D" id="3.40.309.10">
    <property type="entry name" value="Aldehyde Dehydrogenase, Chain A, domain 2"/>
    <property type="match status" value="1"/>
</dbReference>
<dbReference type="HAMAP" id="MF_00412">
    <property type="entry name" value="ProA"/>
    <property type="match status" value="1"/>
</dbReference>
<dbReference type="InterPro" id="IPR016161">
    <property type="entry name" value="Ald_DH/histidinol_DH"/>
</dbReference>
<dbReference type="InterPro" id="IPR016163">
    <property type="entry name" value="Ald_DH_C"/>
</dbReference>
<dbReference type="InterPro" id="IPR016162">
    <property type="entry name" value="Ald_DH_N"/>
</dbReference>
<dbReference type="InterPro" id="IPR015590">
    <property type="entry name" value="Aldehyde_DH_dom"/>
</dbReference>
<dbReference type="InterPro" id="IPR020593">
    <property type="entry name" value="G-glutamylP_reductase_CS"/>
</dbReference>
<dbReference type="InterPro" id="IPR012134">
    <property type="entry name" value="Glu-5-SA_DH"/>
</dbReference>
<dbReference type="InterPro" id="IPR000965">
    <property type="entry name" value="GPR_dom"/>
</dbReference>
<dbReference type="NCBIfam" id="NF001221">
    <property type="entry name" value="PRK00197.1"/>
    <property type="match status" value="1"/>
</dbReference>
<dbReference type="NCBIfam" id="TIGR00407">
    <property type="entry name" value="proA"/>
    <property type="match status" value="1"/>
</dbReference>
<dbReference type="PANTHER" id="PTHR11063:SF8">
    <property type="entry name" value="DELTA-1-PYRROLINE-5-CARBOXYLATE SYNTHASE"/>
    <property type="match status" value="1"/>
</dbReference>
<dbReference type="PANTHER" id="PTHR11063">
    <property type="entry name" value="GLUTAMATE SEMIALDEHYDE DEHYDROGENASE"/>
    <property type="match status" value="1"/>
</dbReference>
<dbReference type="Pfam" id="PF00171">
    <property type="entry name" value="Aldedh"/>
    <property type="match status" value="2"/>
</dbReference>
<dbReference type="PIRSF" id="PIRSF000151">
    <property type="entry name" value="GPR"/>
    <property type="match status" value="1"/>
</dbReference>
<dbReference type="SUPFAM" id="SSF53720">
    <property type="entry name" value="ALDH-like"/>
    <property type="match status" value="1"/>
</dbReference>
<dbReference type="PROSITE" id="PS01223">
    <property type="entry name" value="PROA"/>
    <property type="match status" value="1"/>
</dbReference>
<proteinExistence type="inferred from homology"/>
<keyword id="KW-0028">Amino-acid biosynthesis</keyword>
<keyword id="KW-0963">Cytoplasm</keyword>
<keyword id="KW-0521">NADP</keyword>
<keyword id="KW-0560">Oxidoreductase</keyword>
<keyword id="KW-0641">Proline biosynthesis</keyword>
<keyword id="KW-1185">Reference proteome</keyword>
<organism>
    <name type="scientific">Streptococcus pyogenes serotype M1</name>
    <dbReference type="NCBI Taxonomy" id="301447"/>
    <lineage>
        <taxon>Bacteria</taxon>
        <taxon>Bacillati</taxon>
        <taxon>Bacillota</taxon>
        <taxon>Bacilli</taxon>
        <taxon>Lactobacillales</taxon>
        <taxon>Streptococcaceae</taxon>
        <taxon>Streptococcus</taxon>
    </lineage>
</organism>